<sequence>MAASSWRGAVLLRTVSGLWQAGPDAAREWMTRLPSLLGFQQRCVSCVAGPAFSGPRLASASRPNGQNSALDCFLGLSQPDNSLPFRVPAVSVHRDEQDLLLVHRPDMPENPRVLRVVLLGAPNAGKSTLSNQLLGRKVFPVSKKVHTTRSQALGVITEKETQVILLDTPGLISPAKQKRHHLELSLLEDPWKSMESADLVVVLVDVSDKWTRNQLSPQVLRCLTQFSQVPSILVMNKVDCLKQKSVLLELTAALTEGVVNGKKLKTKQALRSRPDTHCPSPAAQGPNPQPVRDPQQMGWPHFQEIFMLSALSQEDVKTLKQYLLAQARPGPWEFHSEVLTSQTPEEICANMIREKLLEYLPEEVPYNVQQKTVVWDEGPSGELVIEQKLLVSKESHMKILIGPKGYLIAQIAQEVGRDLMNIFLCEVQLRLSVKLLK</sequence>
<comment type="function">
    <text evidence="2">Probable GTPase that plays a role in the mitochondrial ribosomal small subunit assembly. Specifically binds the 12S mitochondrial rRNA (12S mt-rRNA) to a 33 nucleotide section delineating the 3' terminal stem-loop region. May act as a chaperone that protects the 12S mt-rRNA on the 28S mitoribosomal subunit during ribosomal small subunit assembly (By similarity).</text>
</comment>
<comment type="subcellular location">
    <subcellularLocation>
        <location evidence="1">Mitochondrion matrix</location>
    </subcellularLocation>
    <subcellularLocation>
        <location evidence="1">Mitochondrion inner membrane</location>
        <topology evidence="1">Peripheral membrane protein</topology>
    </subcellularLocation>
    <text evidence="1">Localizes on the matrix side on the mitochondrial inner membrane.</text>
</comment>
<comment type="similarity">
    <text evidence="5 7">Belongs to the TRAFAC class TrmE-Era-EngA-EngB-Septin-like GTPase superfamily. Era GTPase family.</text>
</comment>
<organism>
    <name type="scientific">Bos taurus</name>
    <name type="common">Bovine</name>
    <dbReference type="NCBI Taxonomy" id="9913"/>
    <lineage>
        <taxon>Eukaryota</taxon>
        <taxon>Metazoa</taxon>
        <taxon>Chordata</taxon>
        <taxon>Craniata</taxon>
        <taxon>Vertebrata</taxon>
        <taxon>Euteleostomi</taxon>
        <taxon>Mammalia</taxon>
        <taxon>Eutheria</taxon>
        <taxon>Laurasiatheria</taxon>
        <taxon>Artiodactyla</taxon>
        <taxon>Ruminantia</taxon>
        <taxon>Pecora</taxon>
        <taxon>Bovidae</taxon>
        <taxon>Bovinae</taxon>
        <taxon>Bos</taxon>
    </lineage>
</organism>
<dbReference type="EMBL" id="BC142348">
    <property type="protein sequence ID" value="AAI42349.1"/>
    <property type="molecule type" value="mRNA"/>
</dbReference>
<dbReference type="RefSeq" id="NP_001092492.1">
    <property type="nucleotide sequence ID" value="NM_001099022.2"/>
</dbReference>
<dbReference type="SMR" id="A5PK43"/>
<dbReference type="FunCoup" id="A5PK43">
    <property type="interactions" value="3664"/>
</dbReference>
<dbReference type="STRING" id="9913.ENSBTAP00000020770"/>
<dbReference type="PaxDb" id="9913-ENSBTAP00000020770"/>
<dbReference type="GeneID" id="523344"/>
<dbReference type="KEGG" id="bta:523344"/>
<dbReference type="CTD" id="26284"/>
<dbReference type="VEuPathDB" id="HostDB:ENSBTAG00000015639"/>
<dbReference type="eggNOG" id="KOG1423">
    <property type="taxonomic scope" value="Eukaryota"/>
</dbReference>
<dbReference type="HOGENOM" id="CLU_038009_2_1_1"/>
<dbReference type="InParanoid" id="A5PK43"/>
<dbReference type="OMA" id="WAEVDVI"/>
<dbReference type="OrthoDB" id="8954335at2759"/>
<dbReference type="TreeFam" id="TF321650"/>
<dbReference type="Reactome" id="R-BTA-5389840">
    <property type="pathway name" value="Mitochondrial translation elongation"/>
</dbReference>
<dbReference type="Reactome" id="R-BTA-5419276">
    <property type="pathway name" value="Mitochondrial translation termination"/>
</dbReference>
<dbReference type="Proteomes" id="UP000009136">
    <property type="component" value="Chromosome 19"/>
</dbReference>
<dbReference type="Bgee" id="ENSBTAG00000015639">
    <property type="expression patterns" value="Expressed in laryngeal cartilage and 105 other cell types or tissues"/>
</dbReference>
<dbReference type="GO" id="GO:0005743">
    <property type="term" value="C:mitochondrial inner membrane"/>
    <property type="evidence" value="ECO:0007669"/>
    <property type="project" value="UniProtKB-SubCell"/>
</dbReference>
<dbReference type="GO" id="GO:0005759">
    <property type="term" value="C:mitochondrial matrix"/>
    <property type="evidence" value="ECO:0000250"/>
    <property type="project" value="UniProtKB"/>
</dbReference>
<dbReference type="GO" id="GO:0005525">
    <property type="term" value="F:GTP binding"/>
    <property type="evidence" value="ECO:0007669"/>
    <property type="project" value="UniProtKB-KW"/>
</dbReference>
<dbReference type="GO" id="GO:0043024">
    <property type="term" value="F:ribosomal small subunit binding"/>
    <property type="evidence" value="ECO:0000250"/>
    <property type="project" value="UniProtKB"/>
</dbReference>
<dbReference type="GO" id="GO:0019843">
    <property type="term" value="F:rRNA binding"/>
    <property type="evidence" value="ECO:0000250"/>
    <property type="project" value="UniProtKB"/>
</dbReference>
<dbReference type="GO" id="GO:0000028">
    <property type="term" value="P:ribosomal small subunit assembly"/>
    <property type="evidence" value="ECO:0000250"/>
    <property type="project" value="UniProtKB"/>
</dbReference>
<dbReference type="CDD" id="cd04163">
    <property type="entry name" value="Era"/>
    <property type="match status" value="1"/>
</dbReference>
<dbReference type="CDD" id="cd22534">
    <property type="entry name" value="KH-II_Era"/>
    <property type="match status" value="1"/>
</dbReference>
<dbReference type="FunFam" id="3.30.300.20:FF:000016">
    <property type="entry name" value="GTPase Era, mitochondrial isoform 1"/>
    <property type="match status" value="1"/>
</dbReference>
<dbReference type="FunFam" id="3.40.50.300:FF:001024">
    <property type="entry name" value="GTPase Era, mitochondrial isoform 1"/>
    <property type="match status" value="1"/>
</dbReference>
<dbReference type="Gene3D" id="3.30.300.20">
    <property type="match status" value="1"/>
</dbReference>
<dbReference type="Gene3D" id="3.40.50.300">
    <property type="entry name" value="P-loop containing nucleotide triphosphate hydrolases"/>
    <property type="match status" value="1"/>
</dbReference>
<dbReference type="HAMAP" id="MF_00367">
    <property type="entry name" value="GTPase_Era"/>
    <property type="match status" value="1"/>
</dbReference>
<dbReference type="InterPro" id="IPR030388">
    <property type="entry name" value="G_ERA_dom"/>
</dbReference>
<dbReference type="InterPro" id="IPR006073">
    <property type="entry name" value="GTP-bd"/>
</dbReference>
<dbReference type="InterPro" id="IPR005662">
    <property type="entry name" value="GTPase_Era-like"/>
</dbReference>
<dbReference type="InterPro" id="IPR015946">
    <property type="entry name" value="KH_dom-like_a/b"/>
</dbReference>
<dbReference type="InterPro" id="IPR004044">
    <property type="entry name" value="KH_dom_type_2"/>
</dbReference>
<dbReference type="InterPro" id="IPR009019">
    <property type="entry name" value="KH_sf_prok-type"/>
</dbReference>
<dbReference type="InterPro" id="IPR027417">
    <property type="entry name" value="P-loop_NTPase"/>
</dbReference>
<dbReference type="InterPro" id="IPR005225">
    <property type="entry name" value="Small_GTP-bd"/>
</dbReference>
<dbReference type="NCBIfam" id="TIGR00231">
    <property type="entry name" value="small_GTP"/>
    <property type="match status" value="1"/>
</dbReference>
<dbReference type="PANTHER" id="PTHR42698">
    <property type="entry name" value="GTPASE ERA"/>
    <property type="match status" value="1"/>
</dbReference>
<dbReference type="PANTHER" id="PTHR42698:SF1">
    <property type="entry name" value="GTPASE ERA, MITOCHONDRIAL"/>
    <property type="match status" value="1"/>
</dbReference>
<dbReference type="Pfam" id="PF07650">
    <property type="entry name" value="KH_2"/>
    <property type="match status" value="1"/>
</dbReference>
<dbReference type="Pfam" id="PF01926">
    <property type="entry name" value="MMR_HSR1"/>
    <property type="match status" value="1"/>
</dbReference>
<dbReference type="PRINTS" id="PR00326">
    <property type="entry name" value="GTP1OBG"/>
</dbReference>
<dbReference type="SUPFAM" id="SSF52540">
    <property type="entry name" value="P-loop containing nucleoside triphosphate hydrolases"/>
    <property type="match status" value="1"/>
</dbReference>
<dbReference type="SUPFAM" id="SSF54814">
    <property type="entry name" value="Prokaryotic type KH domain (KH-domain type II)"/>
    <property type="match status" value="1"/>
</dbReference>
<dbReference type="PROSITE" id="PS51713">
    <property type="entry name" value="G_ERA"/>
    <property type="match status" value="1"/>
</dbReference>
<name>ERAL1_BOVIN</name>
<gene>
    <name type="primary">ERAL1</name>
</gene>
<accession>A5PK43</accession>
<feature type="transit peptide" description="Mitochondrion" evidence="4">
    <location>
        <begin position="1"/>
        <end position="43"/>
    </location>
</feature>
<feature type="chain" id="PRO_0000404545" description="GTPase Era, mitochondrial">
    <location>
        <begin position="44"/>
        <end position="437"/>
    </location>
</feature>
<feature type="domain" description="Era-type G" evidence="5">
    <location>
        <begin position="112"/>
        <end position="330"/>
    </location>
</feature>
<feature type="domain" description="KH type-2">
    <location>
        <begin position="360"/>
        <end position="437"/>
    </location>
</feature>
<feature type="region of interest" description="G1" evidence="5">
    <location>
        <begin position="120"/>
        <end position="127"/>
    </location>
</feature>
<feature type="region of interest" description="G2" evidence="5">
    <location>
        <begin position="146"/>
        <end position="150"/>
    </location>
</feature>
<feature type="region of interest" description="G3" evidence="5">
    <location>
        <begin position="167"/>
        <end position="170"/>
    </location>
</feature>
<feature type="region of interest" description="G4" evidence="5">
    <location>
        <begin position="236"/>
        <end position="239"/>
    </location>
</feature>
<feature type="region of interest" description="Disordered" evidence="6">
    <location>
        <begin position="264"/>
        <end position="296"/>
    </location>
</feature>
<feature type="region of interest" description="G5" evidence="5">
    <location>
        <begin position="308"/>
        <end position="310"/>
    </location>
</feature>
<feature type="binding site" evidence="3">
    <location>
        <begin position="120"/>
        <end position="127"/>
    </location>
    <ligand>
        <name>GTP</name>
        <dbReference type="ChEBI" id="CHEBI:37565"/>
    </ligand>
</feature>
<feature type="binding site" evidence="3">
    <location>
        <begin position="167"/>
        <end position="171"/>
    </location>
    <ligand>
        <name>GTP</name>
        <dbReference type="ChEBI" id="CHEBI:37565"/>
    </ligand>
</feature>
<feature type="binding site" evidence="3">
    <location>
        <begin position="236"/>
        <end position="239"/>
    </location>
    <ligand>
        <name>GTP</name>
        <dbReference type="ChEBI" id="CHEBI:37565"/>
    </ligand>
</feature>
<feature type="modified residue" description="Phosphoserine" evidence="2">
    <location>
        <position position="173"/>
    </location>
</feature>
<keyword id="KW-0342">GTP-binding</keyword>
<keyword id="KW-0472">Membrane</keyword>
<keyword id="KW-0496">Mitochondrion</keyword>
<keyword id="KW-0999">Mitochondrion inner membrane</keyword>
<keyword id="KW-0547">Nucleotide-binding</keyword>
<keyword id="KW-0597">Phosphoprotein</keyword>
<keyword id="KW-1185">Reference proteome</keyword>
<keyword id="KW-0690">Ribosome biogenesis</keyword>
<keyword id="KW-0694">RNA-binding</keyword>
<keyword id="KW-0699">rRNA-binding</keyword>
<keyword id="KW-0809">Transit peptide</keyword>
<evidence type="ECO:0000250" key="1"/>
<evidence type="ECO:0000250" key="2">
    <source>
        <dbReference type="UniProtKB" id="O75616"/>
    </source>
</evidence>
<evidence type="ECO:0000250" key="3">
    <source>
        <dbReference type="UniProtKB" id="P06616"/>
    </source>
</evidence>
<evidence type="ECO:0000255" key="4"/>
<evidence type="ECO:0000255" key="5">
    <source>
        <dbReference type="PROSITE-ProRule" id="PRU01050"/>
    </source>
</evidence>
<evidence type="ECO:0000256" key="6">
    <source>
        <dbReference type="SAM" id="MobiDB-lite"/>
    </source>
</evidence>
<evidence type="ECO:0000305" key="7"/>
<reference key="1">
    <citation type="submission" date="2007-06" db="EMBL/GenBank/DDBJ databases">
        <authorList>
            <consortium name="NIH - Mammalian Gene Collection (MGC) project"/>
        </authorList>
    </citation>
    <scope>NUCLEOTIDE SEQUENCE [LARGE SCALE MRNA]</scope>
    <source>
        <strain>Hereford</strain>
        <tissue>Ovary</tissue>
    </source>
</reference>
<protein>
    <recommendedName>
        <fullName>GTPase Era, mitochondrial</fullName>
    </recommendedName>
    <alternativeName>
        <fullName>ERA-like protein 1</fullName>
    </alternativeName>
</protein>
<proteinExistence type="evidence at transcript level"/>